<accession>P63421</accession>
<accession>Q8FFA4</accession>
<accession>Q8XBI6</accession>
<comment type="similarity">
    <text evidence="1">Belongs to the acetyltransferase family. YpeA subfamily.</text>
</comment>
<comment type="sequence caution" evidence="2">
    <conflict type="erroneous initiation">
        <sequence resource="EMBL-CDS" id="AAG57552"/>
    </conflict>
    <text>Extended N-terminus.</text>
</comment>
<protein>
    <recommendedName>
        <fullName evidence="1">Acetyltransferase YpeA</fullName>
        <ecNumber evidence="1">2.3.1.-</ecNumber>
    </recommendedName>
</protein>
<sequence>MEIRVFRQEDFEEVITLWERCDLLRPWNDPEMDIERKMNHDVSLFLVAEVNGEVVGTVMGGYDGHRGSAYYLGVHPEFRGRGIANALLNRLEKKLIARGCPKIQINVPEDNDMVLGMYERLGYEHADVLSLGKRLIEDEEY</sequence>
<organism>
    <name type="scientific">Escherichia coli O157:H7</name>
    <dbReference type="NCBI Taxonomy" id="83334"/>
    <lineage>
        <taxon>Bacteria</taxon>
        <taxon>Pseudomonadati</taxon>
        <taxon>Pseudomonadota</taxon>
        <taxon>Gammaproteobacteria</taxon>
        <taxon>Enterobacterales</taxon>
        <taxon>Enterobacteriaceae</taxon>
        <taxon>Escherichia</taxon>
    </lineage>
</organism>
<name>YPEA_ECO57</name>
<keyword id="KW-0012">Acyltransferase</keyword>
<keyword id="KW-1185">Reference proteome</keyword>
<keyword id="KW-0808">Transferase</keyword>
<reference key="1">
    <citation type="journal article" date="2001" name="Nature">
        <title>Genome sequence of enterohaemorrhagic Escherichia coli O157:H7.</title>
        <authorList>
            <person name="Perna N.T."/>
            <person name="Plunkett G. III"/>
            <person name="Burland V."/>
            <person name="Mau B."/>
            <person name="Glasner J.D."/>
            <person name="Rose D.J."/>
            <person name="Mayhew G.F."/>
            <person name="Evans P.S."/>
            <person name="Gregor J."/>
            <person name="Kirkpatrick H.A."/>
            <person name="Posfai G."/>
            <person name="Hackett J."/>
            <person name="Klink S."/>
            <person name="Boutin A."/>
            <person name="Shao Y."/>
            <person name="Miller L."/>
            <person name="Grotbeck E.J."/>
            <person name="Davis N.W."/>
            <person name="Lim A."/>
            <person name="Dimalanta E.T."/>
            <person name="Potamousis K."/>
            <person name="Apodaca J."/>
            <person name="Anantharaman T.S."/>
            <person name="Lin J."/>
            <person name="Yen G."/>
            <person name="Schwartz D.C."/>
            <person name="Welch R.A."/>
            <person name="Blattner F.R."/>
        </authorList>
    </citation>
    <scope>NUCLEOTIDE SEQUENCE [LARGE SCALE GENOMIC DNA]</scope>
    <source>
        <strain>O157:H7 / EDL933 / ATCC 700927 / EHEC</strain>
    </source>
</reference>
<reference key="2">
    <citation type="journal article" date="2001" name="DNA Res.">
        <title>Complete genome sequence of enterohemorrhagic Escherichia coli O157:H7 and genomic comparison with a laboratory strain K-12.</title>
        <authorList>
            <person name="Hayashi T."/>
            <person name="Makino K."/>
            <person name="Ohnishi M."/>
            <person name="Kurokawa K."/>
            <person name="Ishii K."/>
            <person name="Yokoyama K."/>
            <person name="Han C.-G."/>
            <person name="Ohtsubo E."/>
            <person name="Nakayama K."/>
            <person name="Murata T."/>
            <person name="Tanaka M."/>
            <person name="Tobe T."/>
            <person name="Iida T."/>
            <person name="Takami H."/>
            <person name="Honda T."/>
            <person name="Sasakawa C."/>
            <person name="Ogasawara N."/>
            <person name="Yasunaga T."/>
            <person name="Kuhara S."/>
            <person name="Shiba T."/>
            <person name="Hattori M."/>
            <person name="Shinagawa H."/>
        </authorList>
    </citation>
    <scope>NUCLEOTIDE SEQUENCE [LARGE SCALE GENOMIC DNA]</scope>
    <source>
        <strain>O157:H7 / Sakai / RIMD 0509952 / EHEC</strain>
    </source>
</reference>
<feature type="chain" id="PRO_0000074622" description="Acetyltransferase YpeA">
    <location>
        <begin position="1"/>
        <end position="141"/>
    </location>
</feature>
<feature type="domain" description="N-acetyltransferase" evidence="1">
    <location>
        <begin position="1"/>
        <end position="141"/>
    </location>
</feature>
<proteinExistence type="inferred from homology"/>
<dbReference type="EC" id="2.3.1.-" evidence="1"/>
<dbReference type="EMBL" id="AE005174">
    <property type="protein sequence ID" value="AAG57552.1"/>
    <property type="status" value="ALT_INIT"/>
    <property type="molecule type" value="Genomic_DNA"/>
</dbReference>
<dbReference type="EMBL" id="BA000007">
    <property type="protein sequence ID" value="BAB36728.2"/>
    <property type="molecule type" value="Genomic_DNA"/>
</dbReference>
<dbReference type="PIR" id="A91042">
    <property type="entry name" value="A91042"/>
</dbReference>
<dbReference type="PIR" id="D85886">
    <property type="entry name" value="D85886"/>
</dbReference>
<dbReference type="RefSeq" id="NP_311332.2">
    <property type="nucleotide sequence ID" value="NC_002695.1"/>
</dbReference>
<dbReference type="RefSeq" id="WP_000406000.1">
    <property type="nucleotide sequence ID" value="NZ_VOAI01000001.1"/>
</dbReference>
<dbReference type="SMR" id="P63421"/>
<dbReference type="STRING" id="155864.Z3699"/>
<dbReference type="GeneID" id="915305"/>
<dbReference type="KEGG" id="ece:Z3699"/>
<dbReference type="KEGG" id="ecs:ECs_3305"/>
<dbReference type="PATRIC" id="fig|386585.9.peg.3452"/>
<dbReference type="eggNOG" id="COG0456">
    <property type="taxonomic scope" value="Bacteria"/>
</dbReference>
<dbReference type="HOGENOM" id="CLU_013985_34_1_6"/>
<dbReference type="OMA" id="IAGFDGW"/>
<dbReference type="Proteomes" id="UP000000558">
    <property type="component" value="Chromosome"/>
</dbReference>
<dbReference type="Proteomes" id="UP000002519">
    <property type="component" value="Chromosome"/>
</dbReference>
<dbReference type="GO" id="GO:0016747">
    <property type="term" value="F:acyltransferase activity, transferring groups other than amino-acyl groups"/>
    <property type="evidence" value="ECO:0007669"/>
    <property type="project" value="UniProtKB-UniRule"/>
</dbReference>
<dbReference type="CDD" id="cd04301">
    <property type="entry name" value="NAT_SF"/>
    <property type="match status" value="1"/>
</dbReference>
<dbReference type="Gene3D" id="3.40.630.30">
    <property type="match status" value="1"/>
</dbReference>
<dbReference type="HAMAP" id="MF_01127">
    <property type="entry name" value="Acetyltransf_YpeA"/>
    <property type="match status" value="1"/>
</dbReference>
<dbReference type="InterPro" id="IPR023072">
    <property type="entry name" value="Acetyltransferase_YpeA"/>
</dbReference>
<dbReference type="InterPro" id="IPR016181">
    <property type="entry name" value="Acyl_CoA_acyltransferase"/>
</dbReference>
<dbReference type="InterPro" id="IPR050832">
    <property type="entry name" value="Bact_Acetyltransf"/>
</dbReference>
<dbReference type="InterPro" id="IPR000182">
    <property type="entry name" value="GNAT_dom"/>
</dbReference>
<dbReference type="NCBIfam" id="NF002959">
    <property type="entry name" value="PRK03624.1"/>
    <property type="match status" value="1"/>
</dbReference>
<dbReference type="PANTHER" id="PTHR43877">
    <property type="entry name" value="AMINOALKYLPHOSPHONATE N-ACETYLTRANSFERASE-RELATED-RELATED"/>
    <property type="match status" value="1"/>
</dbReference>
<dbReference type="Pfam" id="PF00583">
    <property type="entry name" value="Acetyltransf_1"/>
    <property type="match status" value="1"/>
</dbReference>
<dbReference type="SUPFAM" id="SSF55729">
    <property type="entry name" value="Acyl-CoA N-acyltransferases (Nat)"/>
    <property type="match status" value="1"/>
</dbReference>
<dbReference type="PROSITE" id="PS51186">
    <property type="entry name" value="GNAT"/>
    <property type="match status" value="1"/>
</dbReference>
<gene>
    <name evidence="1" type="primary">ypeA</name>
    <name type="ordered locus">Z3699</name>
    <name type="ordered locus">ECs3305</name>
</gene>
<evidence type="ECO:0000255" key="1">
    <source>
        <dbReference type="HAMAP-Rule" id="MF_01127"/>
    </source>
</evidence>
<evidence type="ECO:0000305" key="2"/>